<reference key="1">
    <citation type="journal article" date="2006" name="Proc. Natl. Acad. Sci. U.S.A.">
        <title>Molecular genetic anatomy of inter- and intraserotype variation in the human bacterial pathogen group A Streptococcus.</title>
        <authorList>
            <person name="Beres S.B."/>
            <person name="Richter E.W."/>
            <person name="Nagiec M.J."/>
            <person name="Sumby P."/>
            <person name="Porcella S.F."/>
            <person name="DeLeo F.R."/>
            <person name="Musser J.M."/>
        </authorList>
    </citation>
    <scope>NUCLEOTIDE SEQUENCE [LARGE SCALE GENOMIC DNA]</scope>
    <source>
        <strain>MGAS2096</strain>
    </source>
</reference>
<proteinExistence type="inferred from homology"/>
<gene>
    <name evidence="1" type="primary">rpmI</name>
    <name type="ordered locus">MGAS2096_Spy0685</name>
</gene>
<evidence type="ECO:0000255" key="1">
    <source>
        <dbReference type="HAMAP-Rule" id="MF_00514"/>
    </source>
</evidence>
<evidence type="ECO:0000256" key="2">
    <source>
        <dbReference type="SAM" id="MobiDB-lite"/>
    </source>
</evidence>
<evidence type="ECO:0000305" key="3"/>
<accession>Q1JCH1</accession>
<keyword id="KW-0687">Ribonucleoprotein</keyword>
<keyword id="KW-0689">Ribosomal protein</keyword>
<feature type="chain" id="PRO_0000258762" description="Large ribosomal subunit protein bL35">
    <location>
        <begin position="1"/>
        <end position="65"/>
    </location>
</feature>
<feature type="region of interest" description="Disordered" evidence="2">
    <location>
        <begin position="1"/>
        <end position="20"/>
    </location>
</feature>
<feature type="compositionally biased region" description="Basic residues" evidence="2">
    <location>
        <begin position="1"/>
        <end position="16"/>
    </location>
</feature>
<sequence length="65" mass="7465">MPKQKTHRASAKRFKRTGSGGLKRFRAFTSHRFHGKTKKQRRHLRKAGLVSSGDFKRIKAMVTGL</sequence>
<protein>
    <recommendedName>
        <fullName evidence="1">Large ribosomal subunit protein bL35</fullName>
    </recommendedName>
    <alternativeName>
        <fullName evidence="3">50S ribosomal protein L35</fullName>
    </alternativeName>
</protein>
<organism>
    <name type="scientific">Streptococcus pyogenes serotype M12 (strain MGAS2096)</name>
    <dbReference type="NCBI Taxonomy" id="370553"/>
    <lineage>
        <taxon>Bacteria</taxon>
        <taxon>Bacillati</taxon>
        <taxon>Bacillota</taxon>
        <taxon>Bacilli</taxon>
        <taxon>Lactobacillales</taxon>
        <taxon>Streptococcaceae</taxon>
        <taxon>Streptococcus</taxon>
    </lineage>
</organism>
<name>RL35_STRPB</name>
<dbReference type="EMBL" id="CP000261">
    <property type="protein sequence ID" value="ABF35737.1"/>
    <property type="molecule type" value="Genomic_DNA"/>
</dbReference>
<dbReference type="SMR" id="Q1JCH1"/>
<dbReference type="KEGG" id="spj:MGAS2096_Spy0685"/>
<dbReference type="HOGENOM" id="CLU_169643_3_1_9"/>
<dbReference type="GO" id="GO:0022625">
    <property type="term" value="C:cytosolic large ribosomal subunit"/>
    <property type="evidence" value="ECO:0007669"/>
    <property type="project" value="TreeGrafter"/>
</dbReference>
<dbReference type="GO" id="GO:0003735">
    <property type="term" value="F:structural constituent of ribosome"/>
    <property type="evidence" value="ECO:0007669"/>
    <property type="project" value="InterPro"/>
</dbReference>
<dbReference type="GO" id="GO:0006412">
    <property type="term" value="P:translation"/>
    <property type="evidence" value="ECO:0007669"/>
    <property type="project" value="UniProtKB-UniRule"/>
</dbReference>
<dbReference type="FunFam" id="4.10.410.60:FF:000001">
    <property type="entry name" value="50S ribosomal protein L35"/>
    <property type="match status" value="1"/>
</dbReference>
<dbReference type="Gene3D" id="4.10.410.60">
    <property type="match status" value="1"/>
</dbReference>
<dbReference type="HAMAP" id="MF_00514">
    <property type="entry name" value="Ribosomal_bL35"/>
    <property type="match status" value="1"/>
</dbReference>
<dbReference type="InterPro" id="IPR001706">
    <property type="entry name" value="Ribosomal_bL35"/>
</dbReference>
<dbReference type="InterPro" id="IPR021137">
    <property type="entry name" value="Ribosomal_bL35-like"/>
</dbReference>
<dbReference type="InterPro" id="IPR018265">
    <property type="entry name" value="Ribosomal_bL35_CS"/>
</dbReference>
<dbReference type="InterPro" id="IPR037229">
    <property type="entry name" value="Ribosomal_bL35_sf"/>
</dbReference>
<dbReference type="NCBIfam" id="TIGR00001">
    <property type="entry name" value="rpmI_bact"/>
    <property type="match status" value="1"/>
</dbReference>
<dbReference type="PANTHER" id="PTHR33343">
    <property type="entry name" value="54S RIBOSOMAL PROTEIN BL35M"/>
    <property type="match status" value="1"/>
</dbReference>
<dbReference type="PANTHER" id="PTHR33343:SF1">
    <property type="entry name" value="LARGE RIBOSOMAL SUBUNIT PROTEIN BL35M"/>
    <property type="match status" value="1"/>
</dbReference>
<dbReference type="Pfam" id="PF01632">
    <property type="entry name" value="Ribosomal_L35p"/>
    <property type="match status" value="1"/>
</dbReference>
<dbReference type="PRINTS" id="PR00064">
    <property type="entry name" value="RIBOSOMALL35"/>
</dbReference>
<dbReference type="SUPFAM" id="SSF143034">
    <property type="entry name" value="L35p-like"/>
    <property type="match status" value="1"/>
</dbReference>
<dbReference type="PROSITE" id="PS00936">
    <property type="entry name" value="RIBOSOMAL_L35"/>
    <property type="match status" value="1"/>
</dbReference>
<comment type="similarity">
    <text evidence="1">Belongs to the bacterial ribosomal protein bL35 family.</text>
</comment>